<evidence type="ECO:0000250" key="1">
    <source>
        <dbReference type="UniProtKB" id="Q12349"/>
    </source>
</evidence>
<evidence type="ECO:0000256" key="2">
    <source>
        <dbReference type="SAM" id="MobiDB-lite"/>
    </source>
</evidence>
<evidence type="ECO:0000269" key="3">
    <source>
    </source>
</evidence>
<evidence type="ECO:0000269" key="4">
    <source>
    </source>
</evidence>
<evidence type="ECO:0000303" key="5">
    <source>
    </source>
</evidence>
<evidence type="ECO:0000305" key="6"/>
<evidence type="ECO:0000305" key="7">
    <source>
    </source>
</evidence>
<evidence type="ECO:0000312" key="8">
    <source>
        <dbReference type="EMBL" id="CAG77813.1"/>
    </source>
</evidence>
<evidence type="ECO:0000312" key="9">
    <source>
        <dbReference type="Proteomes" id="UP000001300"/>
    </source>
</evidence>
<protein>
    <recommendedName>
        <fullName evidence="1">ATP synthase subunit H, mitochondrial</fullName>
    </recommendedName>
</protein>
<sequence length="108" mass="11637">MFTLRAASRRAFSTSIARRNLISEAYTREVRAFKAPKLSAKDAEGQVKPWSAPSAPKPPVVEGADAAELQAYAEAPVDVEGQTNSKSASPQANDEDWLAFEEEEGVAV</sequence>
<comment type="function">
    <text evidence="3 4">Mitochondrial membrane ATP synthase (F(1)F(0) ATP synthase or Complex V) produces ATP from ADP in the presence of a proton gradient across the membrane which is generated by electron transport complexes of the respiratory chain (PubMed:25759169). F-type ATP synthases consist of two structural domains, F(1) - containing the extramembraneous catalytic core, and F(0) - containing the membrane proton channel, linked together by a central stalk and a peripheral stalk (PubMed:27373333). During catalysis, ATP synthesis in the catalytic domain of F(1) is coupled via a rotary mechanism of the central stalk subunits to proton translocation (PubMed:27373333). Part of the peripheral stalk (PubMed:27373333).</text>
</comment>
<comment type="subunit">
    <text evidence="3 4">F-type ATP synthases have 2 components, the catalytic core F(1) and the membrane-embedded component F(0), linked together by a central stalk and a peripheral stalk (PubMed:27373333). The central stalk, also called rotor shaft, is often seen as part of F(1) (PubMed:27373333). The peripheral stalk is seen as part of F(0) (PubMed:27373333). F(0) contains the membrane channel next to the rotor (PubMed:27373333). F-type ATP synthases form dimers but each monomer functions independently in ATP generation (PubMed:27373333). The dimer consists of 17 different polypeptides: ATP1 (subunit alpha, 3 molecules per monomer, part of F(1)), ATP2 (subunit beta, 3 copies per monomer, part of F(1)), ATP3 (subunit gamma, part of the central stalk), ATP4 (subunit b, part of the peripheral stalk), ATP5/OSCP (subunit 5/OSCP, part of the peripheral stalk), ATP6 (subunit a, part of the peripheral stalk), ATP7 (subunit d, part of the peripheral stalk), ATP8 (subunit 8, part of the peripheral stalk), OLI1 (subunit c, part of the rotor, 10 molecules per monomer), ATP14 (subunit H, part of the peripheral stalk), ATP15 (subunit epsilon, part of the central stalk), ATP16 (subunit delta, part of the central stalk), ATP17 (subunit f, part of the peripheral stalk), ATP18 (subunit i/j, part of the peripheral stalk), ATP19 (subunit k, dimer-specific, at interface between monomers), ATP20 (subunit g, at interface between monomers), TIM11 (subunit e, at interface between monomers) (PubMed:25759169, PubMed:27373333).</text>
</comment>
<comment type="subcellular location">
    <subcellularLocation>
        <location evidence="7">Mitochondrion inner membrane</location>
        <topology evidence="7">Peripheral membrane protein</topology>
        <orientation evidence="7">Matrix side</orientation>
    </subcellularLocation>
    <text evidence="7">The F-type ATP synthase complex is anchored in the mitochondrial inner membrane via the F(0) domain with the F(1) domain and the peripheral stalk extending into the mitochondrial matrix.</text>
</comment>
<comment type="mass spectrometry" mass="9457.8" method="MALDI" evidence="3"/>
<comment type="similarity">
    <text evidence="6">Belongs to the ATPase h subunit family.</text>
</comment>
<proteinExistence type="evidence at protein level"/>
<accession>Q6C2V6</accession>
<feature type="transit peptide" description="Mitochondrion" evidence="3">
    <location>
        <begin position="1"/>
        <end position="19"/>
    </location>
</feature>
<feature type="chain" id="PRO_0000445304" description="ATP synthase subunit H, mitochondrial" evidence="6">
    <location>
        <begin position="20"/>
        <end position="108"/>
    </location>
</feature>
<feature type="region of interest" description="Disordered" evidence="2">
    <location>
        <begin position="40"/>
        <end position="60"/>
    </location>
</feature>
<feature type="region of interest" description="Disordered" evidence="2">
    <location>
        <begin position="75"/>
        <end position="108"/>
    </location>
</feature>
<feature type="compositionally biased region" description="Low complexity" evidence="2">
    <location>
        <begin position="47"/>
        <end position="60"/>
    </location>
</feature>
<feature type="compositionally biased region" description="Polar residues" evidence="2">
    <location>
        <begin position="81"/>
        <end position="92"/>
    </location>
</feature>
<feature type="compositionally biased region" description="Acidic residues" evidence="2">
    <location>
        <begin position="93"/>
        <end position="108"/>
    </location>
</feature>
<name>ATP14_YARLI</name>
<dbReference type="EMBL" id="CR382132">
    <property type="protein sequence ID" value="CAG77813.1"/>
    <property type="molecule type" value="Genomic_DNA"/>
</dbReference>
<dbReference type="RefSeq" id="XP_505006.1">
    <property type="nucleotide sequence ID" value="XM_505006.1"/>
</dbReference>
<dbReference type="SMR" id="Q6C2V6"/>
<dbReference type="FunCoup" id="Q6C2V6">
    <property type="interactions" value="135"/>
</dbReference>
<dbReference type="STRING" id="284591.Q6C2V6"/>
<dbReference type="EnsemblFungi" id="CAG77813">
    <property type="protein sequence ID" value="CAG77813"/>
    <property type="gene ID" value="YALI0_F04774g"/>
</dbReference>
<dbReference type="KEGG" id="yli:2908594"/>
<dbReference type="VEuPathDB" id="FungiDB:YALI0_F04774g"/>
<dbReference type="HOGENOM" id="CLU_122989_1_0_1"/>
<dbReference type="InParanoid" id="Q6C2V6"/>
<dbReference type="OMA" id="GHVQKFT"/>
<dbReference type="OrthoDB" id="99985at4891"/>
<dbReference type="Proteomes" id="UP000001300">
    <property type="component" value="Chromosome F"/>
</dbReference>
<dbReference type="GO" id="GO:0005743">
    <property type="term" value="C:mitochondrial inner membrane"/>
    <property type="evidence" value="ECO:0007669"/>
    <property type="project" value="UniProtKB-SubCell"/>
</dbReference>
<dbReference type="GO" id="GO:0045259">
    <property type="term" value="C:proton-transporting ATP synthase complex"/>
    <property type="evidence" value="ECO:0007669"/>
    <property type="project" value="UniProtKB-KW"/>
</dbReference>
<dbReference type="GO" id="GO:0015986">
    <property type="term" value="P:proton motive force-driven ATP synthesis"/>
    <property type="evidence" value="ECO:0000318"/>
    <property type="project" value="GO_Central"/>
</dbReference>
<dbReference type="GO" id="GO:1902600">
    <property type="term" value="P:proton transmembrane transport"/>
    <property type="evidence" value="ECO:0007669"/>
    <property type="project" value="UniProtKB-KW"/>
</dbReference>
<dbReference type="InterPro" id="IPR019711">
    <property type="entry name" value="ATP_synth_F0_suH"/>
</dbReference>
<dbReference type="PANTHER" id="PTHR28207">
    <property type="entry name" value="ATP SYNTHASE SUBUNIT H, MITOCHONDRIAL"/>
    <property type="match status" value="1"/>
</dbReference>
<dbReference type="PANTHER" id="PTHR28207:SF1">
    <property type="entry name" value="ATP SYNTHASE SUBUNIT H, MITOCHONDRIAL"/>
    <property type="match status" value="1"/>
</dbReference>
<dbReference type="Pfam" id="PF10775">
    <property type="entry name" value="ATP_sub_h"/>
    <property type="match status" value="1"/>
</dbReference>
<organism evidence="9">
    <name type="scientific">Yarrowia lipolytica (strain CLIB 122 / E 150)</name>
    <name type="common">Yeast</name>
    <name type="synonym">Candida lipolytica</name>
    <dbReference type="NCBI Taxonomy" id="284591"/>
    <lineage>
        <taxon>Eukaryota</taxon>
        <taxon>Fungi</taxon>
        <taxon>Dikarya</taxon>
        <taxon>Ascomycota</taxon>
        <taxon>Saccharomycotina</taxon>
        <taxon>Dipodascomycetes</taxon>
        <taxon>Dipodascales</taxon>
        <taxon>Dipodascales incertae sedis</taxon>
        <taxon>Yarrowia</taxon>
    </lineage>
</organism>
<gene>
    <name evidence="1" type="primary">ATP14</name>
    <name evidence="8" type="ordered locus">YALI0_F04774g</name>
</gene>
<keyword id="KW-0066">ATP synthesis</keyword>
<keyword id="KW-0138">CF(0)</keyword>
<keyword id="KW-0375">Hydrogen ion transport</keyword>
<keyword id="KW-0406">Ion transport</keyword>
<keyword id="KW-0472">Membrane</keyword>
<keyword id="KW-0496">Mitochondrion</keyword>
<keyword id="KW-0999">Mitochondrion inner membrane</keyword>
<keyword id="KW-1185">Reference proteome</keyword>
<keyword id="KW-0809">Transit peptide</keyword>
<keyword id="KW-0813">Transport</keyword>
<reference evidence="9" key="1">
    <citation type="journal article" date="2004" name="Nature">
        <title>Genome evolution in yeasts.</title>
        <authorList>
            <person name="Dujon B."/>
            <person name="Sherman D."/>
            <person name="Fischer G."/>
            <person name="Durrens P."/>
            <person name="Casaregola S."/>
            <person name="Lafontaine I."/>
            <person name="de Montigny J."/>
            <person name="Marck C."/>
            <person name="Neuveglise C."/>
            <person name="Talla E."/>
            <person name="Goffard N."/>
            <person name="Frangeul L."/>
            <person name="Aigle M."/>
            <person name="Anthouard V."/>
            <person name="Babour A."/>
            <person name="Barbe V."/>
            <person name="Barnay S."/>
            <person name="Blanchin S."/>
            <person name="Beckerich J.-M."/>
            <person name="Beyne E."/>
            <person name="Bleykasten C."/>
            <person name="Boisrame A."/>
            <person name="Boyer J."/>
            <person name="Cattolico L."/>
            <person name="Confanioleri F."/>
            <person name="de Daruvar A."/>
            <person name="Despons L."/>
            <person name="Fabre E."/>
            <person name="Fairhead C."/>
            <person name="Ferry-Dumazet H."/>
            <person name="Groppi A."/>
            <person name="Hantraye F."/>
            <person name="Hennequin C."/>
            <person name="Jauniaux N."/>
            <person name="Joyet P."/>
            <person name="Kachouri R."/>
            <person name="Kerrest A."/>
            <person name="Koszul R."/>
            <person name="Lemaire M."/>
            <person name="Lesur I."/>
            <person name="Ma L."/>
            <person name="Muller H."/>
            <person name="Nicaud J.-M."/>
            <person name="Nikolski M."/>
            <person name="Oztas S."/>
            <person name="Ozier-Kalogeropoulos O."/>
            <person name="Pellenz S."/>
            <person name="Potier S."/>
            <person name="Richard G.-F."/>
            <person name="Straub M.-L."/>
            <person name="Suleau A."/>
            <person name="Swennen D."/>
            <person name="Tekaia F."/>
            <person name="Wesolowski-Louvel M."/>
            <person name="Westhof E."/>
            <person name="Wirth B."/>
            <person name="Zeniou-Meyer M."/>
            <person name="Zivanovic Y."/>
            <person name="Bolotin-Fukuhara M."/>
            <person name="Thierry A."/>
            <person name="Bouchier C."/>
            <person name="Caudron B."/>
            <person name="Scarpelli C."/>
            <person name="Gaillardin C."/>
            <person name="Weissenbach J."/>
            <person name="Wincker P."/>
            <person name="Souciet J.-L."/>
        </authorList>
    </citation>
    <scope>NUCLEOTIDE SEQUENCE [LARGE SCALE GENOMIC DNA]</scope>
    <source>
        <strain>CLIB 122 / E 150</strain>
    </source>
</reference>
<reference evidence="6" key="2">
    <citation type="journal article" date="2015" name="Biochem. J.">
        <title>The purification and characterization of ATP synthase complexes from the mitochondria of four fungal species.</title>
        <authorList>
            <person name="Liu S."/>
            <person name="Charlesworth T.J."/>
            <person name="Bason J.V."/>
            <person name="Montgomery M.G."/>
            <person name="Harbour M.E."/>
            <person name="Fearnley I.M."/>
            <person name="Walker J.E."/>
        </authorList>
    </citation>
    <scope>IDENTIFICATION IN ATP SYNTHASE COMPLEX</scope>
    <scope>FUNCTION OF ATP SYNTHASE COMPLEX</scope>
    <scope>SUBUNIT</scope>
    <scope>SUBCELLULAR LOCATION</scope>
    <scope>MASS SPECTROMETRY</scope>
    <scope>IDENTIFICATION BY MASS SPECTROMETRY</scope>
    <source>
        <strain evidence="5">CLIB 122 / E 150</strain>
    </source>
</reference>
<reference evidence="6" key="3">
    <citation type="journal article" date="2016" name="Mol. Cell">
        <title>Structure of a Complete ATP Synthase Dimer Reveals the Molecular Basis of Inner Mitochondrial Membrane Morphology.</title>
        <authorList>
            <person name="Hahn A."/>
            <person name="Parey K."/>
            <person name="Bublitz M."/>
            <person name="Mills D.J."/>
            <person name="Zickermann V."/>
            <person name="Vonck J."/>
            <person name="Kuehlbrandt W."/>
            <person name="Meier T."/>
        </authorList>
    </citation>
    <scope>STRUCTURE BY ELECTRON MICROSCOPY (7.7 ANGSTROMS) OF DIMERIC ATP SYNTHASE COMPLEX</scope>
    <scope>FUNCTION</scope>
    <scope>SUBUNIT</scope>
    <scope>SUBCELLULAR LOCATION</scope>
</reference>